<organism>
    <name type="scientific">Legionella pneumophila subsp. pneumophila (strain Philadelphia 1 / ATCC 33152 / DSM 7513)</name>
    <dbReference type="NCBI Taxonomy" id="272624"/>
    <lineage>
        <taxon>Bacteria</taxon>
        <taxon>Pseudomonadati</taxon>
        <taxon>Pseudomonadota</taxon>
        <taxon>Gammaproteobacteria</taxon>
        <taxon>Legionellales</taxon>
        <taxon>Legionellaceae</taxon>
        <taxon>Legionella</taxon>
    </lineage>
</organism>
<gene>
    <name type="ordered locus">lpg2959</name>
</gene>
<comment type="similarity">
    <text evidence="3">Belongs to the UPF0422 family.</text>
</comment>
<name>Y2959_LEGPH</name>
<accession>Q5ZRC3</accession>
<reference key="1">
    <citation type="journal article" date="2004" name="Science">
        <title>The genomic sequence of the accidental pathogen Legionella pneumophila.</title>
        <authorList>
            <person name="Chien M."/>
            <person name="Morozova I."/>
            <person name="Shi S."/>
            <person name="Sheng H."/>
            <person name="Chen J."/>
            <person name="Gomez S.M."/>
            <person name="Asamani G."/>
            <person name="Hill K."/>
            <person name="Nuara J."/>
            <person name="Feder M."/>
            <person name="Rineer J."/>
            <person name="Greenberg J.J."/>
            <person name="Steshenko V."/>
            <person name="Park S.H."/>
            <person name="Zhao B."/>
            <person name="Teplitskaya E."/>
            <person name="Edwards J.R."/>
            <person name="Pampou S."/>
            <person name="Georghiou A."/>
            <person name="Chou I.-C."/>
            <person name="Iannuccilli W."/>
            <person name="Ulz M.E."/>
            <person name="Kim D.H."/>
            <person name="Geringer-Sameth A."/>
            <person name="Goldsberry C."/>
            <person name="Morozov P."/>
            <person name="Fischer S.G."/>
            <person name="Segal G."/>
            <person name="Qu X."/>
            <person name="Rzhetsky A."/>
            <person name="Zhang P."/>
            <person name="Cayanis E."/>
            <person name="De Jong P.J."/>
            <person name="Ju J."/>
            <person name="Kalachikov S."/>
            <person name="Shuman H.A."/>
            <person name="Russo J.J."/>
        </authorList>
    </citation>
    <scope>NUCLEOTIDE SEQUENCE [LARGE SCALE GENOMIC DNA]</scope>
    <source>
        <strain>Philadelphia 1 / ATCC 33152 / DSM 7513</strain>
    </source>
</reference>
<dbReference type="EMBL" id="AE017354">
    <property type="protein sequence ID" value="AAU29005.1"/>
    <property type="molecule type" value="Genomic_DNA"/>
</dbReference>
<dbReference type="RefSeq" id="WP_010948644.1">
    <property type="nucleotide sequence ID" value="NC_002942.5"/>
</dbReference>
<dbReference type="RefSeq" id="YP_096952.1">
    <property type="nucleotide sequence ID" value="NC_002942.5"/>
</dbReference>
<dbReference type="STRING" id="272624.lpg2959"/>
<dbReference type="PaxDb" id="272624-lpg2959"/>
<dbReference type="KEGG" id="lpn:lpg2959"/>
<dbReference type="PATRIC" id="fig|272624.6.peg.3164"/>
<dbReference type="eggNOG" id="COG3203">
    <property type="taxonomic scope" value="Bacteria"/>
</dbReference>
<dbReference type="HOGENOM" id="CLU_035501_0_0_6"/>
<dbReference type="OrthoDB" id="5417572at2"/>
<dbReference type="Proteomes" id="UP000000609">
    <property type="component" value="Chromosome"/>
</dbReference>
<dbReference type="NCBIfam" id="NF033652">
    <property type="entry name" value="LbtU_sider_porin"/>
    <property type="match status" value="1"/>
</dbReference>
<proteinExistence type="inferred from homology"/>
<protein>
    <recommendedName>
        <fullName>UPF0422 protein lpg2959</fullName>
    </recommendedName>
</protein>
<keyword id="KW-0175">Coiled coil</keyword>
<keyword id="KW-1185">Reference proteome</keyword>
<keyword id="KW-0732">Signal</keyword>
<feature type="signal peptide" evidence="1">
    <location>
        <begin position="1"/>
        <end position="19"/>
    </location>
</feature>
<feature type="chain" id="PRO_0000283756" description="UPF0422 protein lpg2959">
    <location>
        <begin position="20"/>
        <end position="530"/>
    </location>
</feature>
<feature type="region of interest" description="Disordered" evidence="2">
    <location>
        <begin position="50"/>
        <end position="81"/>
    </location>
</feature>
<feature type="coiled-coil region" evidence="1">
    <location>
        <begin position="20"/>
        <end position="66"/>
    </location>
</feature>
<feature type="compositionally biased region" description="Low complexity" evidence="2">
    <location>
        <begin position="63"/>
        <end position="75"/>
    </location>
</feature>
<evidence type="ECO:0000255" key="1"/>
<evidence type="ECO:0000256" key="2">
    <source>
        <dbReference type="SAM" id="MobiDB-lite"/>
    </source>
</evidence>
<evidence type="ECO:0000305" key="3"/>
<sequence>MKFKKIILALACLSSPLYADQDQQLKSEIQRLQHQAEDLQAQLNRLQKQLANHKSSQQKHEQQAAAKPAEPQSKPTVKSGAAIEEKYHSSKVEVHAPDAHPESISFYPTALIADNRVVTYIAGTPVVSSPFLGDRPAFDGSDYIVNISSINRDVRLMQQRRRLYRAYQKIGYPIPNMPIISLSGKAEPAATFNNPFRSTNTDGDITLGSSELDVAAALNENVEAYIAIAYDESPPAIGPRVNNSAFNLNMGFVNIGNLDKSPLYFTAGQVYVPFGRYSSAMVSSPVTMNLARTKTRPVIFGYKSQADTGPFGAVYGYRSDTTLGRSGVGGVNLGYIFGFDNDINGEVGGGFISSIADAGGMQSTGANVGTTFGGFGSITNGNENVRKTKAADVHGHVGYDRYNLTLEWVGAIQSFRPQDLSFNGQGARPQAAQAELGMTFMAFNRPASIGVGYQWTKEALALNLPKRRYVGVFNISIWKDTVESIEYRHDIDYGLTQFANGAAPQGFVNLPTLGTGKSADTVSAQIGVYF</sequence>